<accession>A6BM55</accession>
<accession>B7ZI67</accession>
<keyword id="KW-0150">Chloroplast</keyword>
<keyword id="KW-0934">Plastid</keyword>
<keyword id="KW-0687">Ribonucleoprotein</keyword>
<keyword id="KW-0689">Ribosomal protein</keyword>
<keyword id="KW-0694">RNA-binding</keyword>
<keyword id="KW-0699">rRNA-binding</keyword>
<gene>
    <name type="primary">rps7-A</name>
</gene>
<gene>
    <name type="primary">rps7-B</name>
</gene>
<dbReference type="EMBL" id="AB295951">
    <property type="protein sequence ID" value="BAF64900.1"/>
    <property type="molecule type" value="Genomic_DNA"/>
</dbReference>
<dbReference type="EMBL" id="AP009569">
    <property type="protein sequence ID" value="BAH11247.1"/>
    <property type="molecule type" value="Genomic_DNA"/>
</dbReference>
<dbReference type="EMBL" id="AP009569">
    <property type="protein sequence ID" value="BAH11251.1"/>
    <property type="molecule type" value="Genomic_DNA"/>
</dbReference>
<dbReference type="SMR" id="A6BM55"/>
<dbReference type="GO" id="GO:0009507">
    <property type="term" value="C:chloroplast"/>
    <property type="evidence" value="ECO:0007669"/>
    <property type="project" value="UniProtKB-SubCell"/>
</dbReference>
<dbReference type="GO" id="GO:0015935">
    <property type="term" value="C:small ribosomal subunit"/>
    <property type="evidence" value="ECO:0007669"/>
    <property type="project" value="InterPro"/>
</dbReference>
<dbReference type="GO" id="GO:0019843">
    <property type="term" value="F:rRNA binding"/>
    <property type="evidence" value="ECO:0007669"/>
    <property type="project" value="UniProtKB-UniRule"/>
</dbReference>
<dbReference type="GO" id="GO:0003735">
    <property type="term" value="F:structural constituent of ribosome"/>
    <property type="evidence" value="ECO:0007669"/>
    <property type="project" value="InterPro"/>
</dbReference>
<dbReference type="GO" id="GO:0006412">
    <property type="term" value="P:translation"/>
    <property type="evidence" value="ECO:0007669"/>
    <property type="project" value="UniProtKB-UniRule"/>
</dbReference>
<dbReference type="CDD" id="cd14871">
    <property type="entry name" value="uS7_Chloroplast"/>
    <property type="match status" value="1"/>
</dbReference>
<dbReference type="FunFam" id="1.10.455.10:FF:000001">
    <property type="entry name" value="30S ribosomal protein S7"/>
    <property type="match status" value="1"/>
</dbReference>
<dbReference type="Gene3D" id="1.10.455.10">
    <property type="entry name" value="Ribosomal protein S7 domain"/>
    <property type="match status" value="1"/>
</dbReference>
<dbReference type="HAMAP" id="MF_00480_B">
    <property type="entry name" value="Ribosomal_uS7_B"/>
    <property type="match status" value="1"/>
</dbReference>
<dbReference type="InterPro" id="IPR000235">
    <property type="entry name" value="Ribosomal_uS7"/>
</dbReference>
<dbReference type="InterPro" id="IPR005717">
    <property type="entry name" value="Ribosomal_uS7_bac/org-type"/>
</dbReference>
<dbReference type="InterPro" id="IPR020606">
    <property type="entry name" value="Ribosomal_uS7_CS"/>
</dbReference>
<dbReference type="InterPro" id="IPR023798">
    <property type="entry name" value="Ribosomal_uS7_dom"/>
</dbReference>
<dbReference type="InterPro" id="IPR036823">
    <property type="entry name" value="Ribosomal_uS7_dom_sf"/>
</dbReference>
<dbReference type="NCBIfam" id="TIGR01029">
    <property type="entry name" value="rpsG_bact"/>
    <property type="match status" value="1"/>
</dbReference>
<dbReference type="PANTHER" id="PTHR11205">
    <property type="entry name" value="RIBOSOMAL PROTEIN S7"/>
    <property type="match status" value="1"/>
</dbReference>
<dbReference type="Pfam" id="PF00177">
    <property type="entry name" value="Ribosomal_S7"/>
    <property type="match status" value="1"/>
</dbReference>
<dbReference type="PIRSF" id="PIRSF002122">
    <property type="entry name" value="RPS7p_RPS7a_RPS5e_RPS7o"/>
    <property type="match status" value="1"/>
</dbReference>
<dbReference type="SUPFAM" id="SSF47973">
    <property type="entry name" value="Ribosomal protein S7"/>
    <property type="match status" value="1"/>
</dbReference>
<dbReference type="PROSITE" id="PS00052">
    <property type="entry name" value="RIBOSOMAL_S7"/>
    <property type="match status" value="1"/>
</dbReference>
<feature type="chain" id="PRO_0000344339" description="Small ribosomal subunit protein uS7cz/uS7cy">
    <location>
        <begin position="1"/>
        <end position="157"/>
    </location>
</feature>
<evidence type="ECO:0000250" key="1"/>
<evidence type="ECO:0000255" key="2">
    <source>
        <dbReference type="HAMAP-Rule" id="MF_00480"/>
    </source>
</evidence>
<evidence type="ECO:0000305" key="3"/>
<sequence length="157" mass="18377">MSRRNTAKKTKRADKFDPIYQNRLVNMVLNRIIKHGKKSLAYRILYRAMKQIQQKTEKNPLLVLRKAIKEVTPRLIVKSRRKSGSTYQVPFEIKPNRGKILAIRWLLKASRKRLGPNMESKLSYELIDATKGKGKAIRKKEEIHKMAEANRAFADYL</sequence>
<geneLocation type="chloroplast"/>
<name>RR7_GNEPA</name>
<comment type="function">
    <text evidence="1">One of the primary rRNA binding proteins, it binds directly to 16S rRNA where it nucleates assembly of the head domain of the 30S subunit.</text>
</comment>
<comment type="subunit">
    <text evidence="1">Part of the 30S ribosomal subunit.</text>
</comment>
<comment type="subcellular location">
    <subcellularLocation>
        <location>Plastid</location>
        <location>Chloroplast</location>
    </subcellularLocation>
</comment>
<comment type="similarity">
    <text evidence="3">Belongs to the universal ribosomal protein uS7 family.</text>
</comment>
<protein>
    <recommendedName>
        <fullName evidence="2">Small ribosomal subunit protein uS7cz/uS7cy</fullName>
    </recommendedName>
    <alternativeName>
        <fullName>30S ribosomal protein S7, chloroplastic</fullName>
    </alternativeName>
</protein>
<proteinExistence type="inferred from homology"/>
<reference key="1">
    <citation type="journal article" date="2007" name="Mol. Biol. Evol.">
        <title>Chloroplast genome (cpDNA) of Cycas taitungensis and 56 cp protein-coding genes of Gnetum parvifolium: insights into cpDNA evolution and phylogeny of extant seed plants.</title>
        <authorList>
            <person name="Wu C.-S."/>
            <person name="Wang Y.-N."/>
            <person name="Liu S.-M."/>
            <person name="Chaw S.-M."/>
        </authorList>
    </citation>
    <scope>NUCLEOTIDE SEQUENCE [LARGE SCALE GENOMIC DNA]</scope>
</reference>
<reference key="2">
    <citation type="journal article" date="2009" name="Mol. Phylogenet. Evol.">
        <title>Evolution of reduced and compact chloroplast genomes (cpDNAs) in gnetophytes: Selection toward a lower-cost strategy.</title>
        <authorList>
            <person name="Wu C.-S."/>
            <person name="Lai Y.-T."/>
            <person name="Lin C.-P."/>
            <person name="Wang Y.-N."/>
            <person name="Chaw S.-M."/>
        </authorList>
    </citation>
    <scope>NUCLEOTIDE SEQUENCE [LARGE SCALE GENOMIC DNA]</scope>
</reference>
<organism>
    <name type="scientific">Gnetum parvifolium</name>
    <name type="common">Small-leaved jointfir</name>
    <name type="synonym">Gnetum scandens var. parvifolium</name>
    <dbReference type="NCBI Taxonomy" id="33153"/>
    <lineage>
        <taxon>Eukaryota</taxon>
        <taxon>Viridiplantae</taxon>
        <taxon>Streptophyta</taxon>
        <taxon>Embryophyta</taxon>
        <taxon>Tracheophyta</taxon>
        <taxon>Spermatophyta</taxon>
        <taxon>Gnetopsida</taxon>
        <taxon>Gnetidae</taxon>
        <taxon>Gnetales</taxon>
        <taxon>Gnetaceae</taxon>
        <taxon>Gnetum</taxon>
    </lineage>
</organism>